<comment type="function">
    <text evidence="1">Plays an important role in the de novo pathway of purine nucleotide biosynthesis. Catalyzes the first committed step in the biosynthesis of AMP from IMP.</text>
</comment>
<comment type="catalytic activity">
    <reaction evidence="1">
        <text>IMP + L-aspartate + GTP = N(6)-(1,2-dicarboxyethyl)-AMP + GDP + phosphate + 2 H(+)</text>
        <dbReference type="Rhea" id="RHEA:15753"/>
        <dbReference type="ChEBI" id="CHEBI:15378"/>
        <dbReference type="ChEBI" id="CHEBI:29991"/>
        <dbReference type="ChEBI" id="CHEBI:37565"/>
        <dbReference type="ChEBI" id="CHEBI:43474"/>
        <dbReference type="ChEBI" id="CHEBI:57567"/>
        <dbReference type="ChEBI" id="CHEBI:58053"/>
        <dbReference type="ChEBI" id="CHEBI:58189"/>
        <dbReference type="EC" id="6.3.4.4"/>
    </reaction>
</comment>
<comment type="cofactor">
    <cofactor evidence="1">
        <name>Mg(2+)</name>
        <dbReference type="ChEBI" id="CHEBI:18420"/>
    </cofactor>
    <text evidence="1">Binds 1 Mg(2+) ion per subunit.</text>
</comment>
<comment type="pathway">
    <text evidence="1">Purine metabolism; AMP biosynthesis via de novo pathway; AMP from IMP: step 1/2.</text>
</comment>
<comment type="subunit">
    <text evidence="1">Homodimer.</text>
</comment>
<comment type="subcellular location">
    <subcellularLocation>
        <location evidence="1">Cytoplasm</location>
    </subcellularLocation>
</comment>
<comment type="similarity">
    <text evidence="1">Belongs to the adenylosuccinate synthetase family.</text>
</comment>
<evidence type="ECO:0000255" key="1">
    <source>
        <dbReference type="HAMAP-Rule" id="MF_00011"/>
    </source>
</evidence>
<keyword id="KW-0963">Cytoplasm</keyword>
<keyword id="KW-0342">GTP-binding</keyword>
<keyword id="KW-0436">Ligase</keyword>
<keyword id="KW-0460">Magnesium</keyword>
<keyword id="KW-0479">Metal-binding</keyword>
<keyword id="KW-0547">Nucleotide-binding</keyword>
<keyword id="KW-0658">Purine biosynthesis</keyword>
<accession>Q1J1X6</accession>
<sequence>MPGIAIIGAQWGDEGKGKITDFLAPQADYVVRYQGGANAGHTVTAKGQTFKLNLLPSGVLHPGTVSILGDGMVIDPEKFLAERQNLLDGGLQPELRISDRAHLVLPHHKFVDGRKDFVGTTGRGIGPAYADRARRVGIRFGDLADESVLRERVERLLEAKPNSTRDAGWTSVTDALGYLLPIRDALLPFVGDTGAQLRQAIREGRNVLFEGAQATLLDLNYGTYPFVTSSHPTVGGILVGAGVNHKAINKVYGVAKAFNTRVGHGPFPTEVFGEMETRLRGDGSNPWDEFGTTTGRARRVGWLDLALLKYAVDVNGLDGLVINKMDILAGLDTVKVGVGYNAAGQPVYRELPGWATTAGAESRATLPKEAQAYLDLIEETVNCPVVIFSCGPAREQTYGAVSWD</sequence>
<dbReference type="EC" id="6.3.4.4" evidence="1"/>
<dbReference type="EMBL" id="CP000359">
    <property type="protein sequence ID" value="ABF44508.1"/>
    <property type="molecule type" value="Genomic_DNA"/>
</dbReference>
<dbReference type="RefSeq" id="WP_011529355.1">
    <property type="nucleotide sequence ID" value="NC_008025.1"/>
</dbReference>
<dbReference type="SMR" id="Q1J1X6"/>
<dbReference type="STRING" id="319795.Dgeo_0205"/>
<dbReference type="KEGG" id="dge:Dgeo_0205"/>
<dbReference type="eggNOG" id="COG0104">
    <property type="taxonomic scope" value="Bacteria"/>
</dbReference>
<dbReference type="HOGENOM" id="CLU_029848_0_0_0"/>
<dbReference type="UniPathway" id="UPA00075">
    <property type="reaction ID" value="UER00335"/>
</dbReference>
<dbReference type="Proteomes" id="UP000002431">
    <property type="component" value="Chromosome"/>
</dbReference>
<dbReference type="GO" id="GO:0005737">
    <property type="term" value="C:cytoplasm"/>
    <property type="evidence" value="ECO:0007669"/>
    <property type="project" value="UniProtKB-SubCell"/>
</dbReference>
<dbReference type="GO" id="GO:0004019">
    <property type="term" value="F:adenylosuccinate synthase activity"/>
    <property type="evidence" value="ECO:0007669"/>
    <property type="project" value="UniProtKB-UniRule"/>
</dbReference>
<dbReference type="GO" id="GO:0005525">
    <property type="term" value="F:GTP binding"/>
    <property type="evidence" value="ECO:0007669"/>
    <property type="project" value="UniProtKB-UniRule"/>
</dbReference>
<dbReference type="GO" id="GO:0000287">
    <property type="term" value="F:magnesium ion binding"/>
    <property type="evidence" value="ECO:0007669"/>
    <property type="project" value="UniProtKB-UniRule"/>
</dbReference>
<dbReference type="GO" id="GO:0044208">
    <property type="term" value="P:'de novo' AMP biosynthetic process"/>
    <property type="evidence" value="ECO:0007669"/>
    <property type="project" value="UniProtKB-UniRule"/>
</dbReference>
<dbReference type="GO" id="GO:0046040">
    <property type="term" value="P:IMP metabolic process"/>
    <property type="evidence" value="ECO:0007669"/>
    <property type="project" value="TreeGrafter"/>
</dbReference>
<dbReference type="CDD" id="cd03108">
    <property type="entry name" value="AdSS"/>
    <property type="match status" value="1"/>
</dbReference>
<dbReference type="FunFam" id="3.90.170.10:FF:000001">
    <property type="entry name" value="Adenylosuccinate synthetase"/>
    <property type="match status" value="1"/>
</dbReference>
<dbReference type="Gene3D" id="3.40.440.10">
    <property type="entry name" value="Adenylosuccinate Synthetase, subunit A, domain 1"/>
    <property type="match status" value="1"/>
</dbReference>
<dbReference type="Gene3D" id="1.10.300.10">
    <property type="entry name" value="Adenylosuccinate Synthetase, subunit A, domain 2"/>
    <property type="match status" value="1"/>
</dbReference>
<dbReference type="Gene3D" id="3.90.170.10">
    <property type="entry name" value="Adenylosuccinate Synthetase, subunit A, domain 3"/>
    <property type="match status" value="1"/>
</dbReference>
<dbReference type="HAMAP" id="MF_00011">
    <property type="entry name" value="Adenylosucc_synth"/>
    <property type="match status" value="1"/>
</dbReference>
<dbReference type="InterPro" id="IPR018220">
    <property type="entry name" value="Adenylosuccin_syn_GTP-bd"/>
</dbReference>
<dbReference type="InterPro" id="IPR042109">
    <property type="entry name" value="Adenylosuccinate_synth_dom1"/>
</dbReference>
<dbReference type="InterPro" id="IPR042110">
    <property type="entry name" value="Adenylosuccinate_synth_dom2"/>
</dbReference>
<dbReference type="InterPro" id="IPR042111">
    <property type="entry name" value="Adenylosuccinate_synth_dom3"/>
</dbReference>
<dbReference type="InterPro" id="IPR001114">
    <property type="entry name" value="Adenylosuccinate_synthetase"/>
</dbReference>
<dbReference type="InterPro" id="IPR027417">
    <property type="entry name" value="P-loop_NTPase"/>
</dbReference>
<dbReference type="NCBIfam" id="NF002223">
    <property type="entry name" value="PRK01117.1"/>
    <property type="match status" value="1"/>
</dbReference>
<dbReference type="NCBIfam" id="TIGR00184">
    <property type="entry name" value="purA"/>
    <property type="match status" value="1"/>
</dbReference>
<dbReference type="PANTHER" id="PTHR11846">
    <property type="entry name" value="ADENYLOSUCCINATE SYNTHETASE"/>
    <property type="match status" value="1"/>
</dbReference>
<dbReference type="PANTHER" id="PTHR11846:SF0">
    <property type="entry name" value="ADENYLOSUCCINATE SYNTHETASE"/>
    <property type="match status" value="1"/>
</dbReference>
<dbReference type="Pfam" id="PF00709">
    <property type="entry name" value="Adenylsucc_synt"/>
    <property type="match status" value="1"/>
</dbReference>
<dbReference type="SMART" id="SM00788">
    <property type="entry name" value="Adenylsucc_synt"/>
    <property type="match status" value="1"/>
</dbReference>
<dbReference type="SUPFAM" id="SSF52540">
    <property type="entry name" value="P-loop containing nucleoside triphosphate hydrolases"/>
    <property type="match status" value="1"/>
</dbReference>
<dbReference type="PROSITE" id="PS01266">
    <property type="entry name" value="ADENYLOSUCCIN_SYN_1"/>
    <property type="match status" value="1"/>
</dbReference>
<feature type="chain" id="PRO_1000000810" description="Adenylosuccinate synthetase">
    <location>
        <begin position="1"/>
        <end position="404"/>
    </location>
</feature>
<feature type="active site" description="Proton acceptor" evidence="1">
    <location>
        <position position="13"/>
    </location>
</feature>
<feature type="active site" description="Proton donor" evidence="1">
    <location>
        <position position="41"/>
    </location>
</feature>
<feature type="binding site" evidence="1">
    <location>
        <begin position="12"/>
        <end position="18"/>
    </location>
    <ligand>
        <name>GTP</name>
        <dbReference type="ChEBI" id="CHEBI:37565"/>
    </ligand>
</feature>
<feature type="binding site" description="in other chain" evidence="1">
    <location>
        <begin position="13"/>
        <end position="16"/>
    </location>
    <ligand>
        <name>IMP</name>
        <dbReference type="ChEBI" id="CHEBI:58053"/>
        <note>ligand shared between dimeric partners</note>
    </ligand>
</feature>
<feature type="binding site" evidence="1">
    <location>
        <position position="13"/>
    </location>
    <ligand>
        <name>Mg(2+)</name>
        <dbReference type="ChEBI" id="CHEBI:18420"/>
    </ligand>
</feature>
<feature type="binding site" description="in other chain" evidence="1">
    <location>
        <begin position="38"/>
        <end position="41"/>
    </location>
    <ligand>
        <name>IMP</name>
        <dbReference type="ChEBI" id="CHEBI:58053"/>
        <note>ligand shared between dimeric partners</note>
    </ligand>
</feature>
<feature type="binding site" evidence="1">
    <location>
        <begin position="40"/>
        <end position="42"/>
    </location>
    <ligand>
        <name>GTP</name>
        <dbReference type="ChEBI" id="CHEBI:37565"/>
    </ligand>
</feature>
<feature type="binding site" evidence="1">
    <location>
        <position position="40"/>
    </location>
    <ligand>
        <name>Mg(2+)</name>
        <dbReference type="ChEBI" id="CHEBI:18420"/>
    </ligand>
</feature>
<feature type="binding site" description="in other chain" evidence="1">
    <location>
        <position position="121"/>
    </location>
    <ligand>
        <name>IMP</name>
        <dbReference type="ChEBI" id="CHEBI:58053"/>
        <note>ligand shared between dimeric partners</note>
    </ligand>
</feature>
<feature type="binding site" evidence="1">
    <location>
        <position position="135"/>
    </location>
    <ligand>
        <name>IMP</name>
        <dbReference type="ChEBI" id="CHEBI:58053"/>
        <note>ligand shared between dimeric partners</note>
    </ligand>
</feature>
<feature type="binding site" description="in other chain" evidence="1">
    <location>
        <position position="213"/>
    </location>
    <ligand>
        <name>IMP</name>
        <dbReference type="ChEBI" id="CHEBI:58053"/>
        <note>ligand shared between dimeric partners</note>
    </ligand>
</feature>
<feature type="binding site" description="in other chain" evidence="1">
    <location>
        <position position="228"/>
    </location>
    <ligand>
        <name>IMP</name>
        <dbReference type="ChEBI" id="CHEBI:58053"/>
        <note>ligand shared between dimeric partners</note>
    </ligand>
</feature>
<feature type="binding site" evidence="1">
    <location>
        <begin position="292"/>
        <end position="298"/>
    </location>
    <ligand>
        <name>substrate</name>
    </ligand>
</feature>
<feature type="binding site" description="in other chain" evidence="1">
    <location>
        <position position="296"/>
    </location>
    <ligand>
        <name>IMP</name>
        <dbReference type="ChEBI" id="CHEBI:58053"/>
        <note>ligand shared between dimeric partners</note>
    </ligand>
</feature>
<feature type="binding site" evidence="1">
    <location>
        <position position="298"/>
    </location>
    <ligand>
        <name>GTP</name>
        <dbReference type="ChEBI" id="CHEBI:37565"/>
    </ligand>
</feature>
<feature type="binding site" evidence="1">
    <location>
        <begin position="324"/>
        <end position="326"/>
    </location>
    <ligand>
        <name>GTP</name>
        <dbReference type="ChEBI" id="CHEBI:37565"/>
    </ligand>
</feature>
<feature type="binding site" evidence="1">
    <location>
        <begin position="389"/>
        <end position="391"/>
    </location>
    <ligand>
        <name>GTP</name>
        <dbReference type="ChEBI" id="CHEBI:37565"/>
    </ligand>
</feature>
<organism>
    <name type="scientific">Deinococcus geothermalis (strain DSM 11300 / CIP 105573 / AG-3a)</name>
    <dbReference type="NCBI Taxonomy" id="319795"/>
    <lineage>
        <taxon>Bacteria</taxon>
        <taxon>Thermotogati</taxon>
        <taxon>Deinococcota</taxon>
        <taxon>Deinococci</taxon>
        <taxon>Deinococcales</taxon>
        <taxon>Deinococcaceae</taxon>
        <taxon>Deinococcus</taxon>
    </lineage>
</organism>
<name>PURA_DEIGD</name>
<protein>
    <recommendedName>
        <fullName evidence="1">Adenylosuccinate synthetase</fullName>
        <shortName evidence="1">AMPSase</shortName>
        <shortName evidence="1">AdSS</shortName>
        <ecNumber evidence="1">6.3.4.4</ecNumber>
    </recommendedName>
    <alternativeName>
        <fullName evidence="1">IMP--aspartate ligase</fullName>
    </alternativeName>
</protein>
<proteinExistence type="inferred from homology"/>
<reference key="1">
    <citation type="submission" date="2006-04" db="EMBL/GenBank/DDBJ databases">
        <title>Complete sequence of chromosome of Deinococcus geothermalis DSM 11300.</title>
        <authorList>
            <person name="Copeland A."/>
            <person name="Lucas S."/>
            <person name="Lapidus A."/>
            <person name="Barry K."/>
            <person name="Detter J.C."/>
            <person name="Glavina del Rio T."/>
            <person name="Hammon N."/>
            <person name="Israni S."/>
            <person name="Dalin E."/>
            <person name="Tice H."/>
            <person name="Pitluck S."/>
            <person name="Brettin T."/>
            <person name="Bruce D."/>
            <person name="Han C."/>
            <person name="Tapia R."/>
            <person name="Saunders E."/>
            <person name="Gilna P."/>
            <person name="Schmutz J."/>
            <person name="Larimer F."/>
            <person name="Land M."/>
            <person name="Hauser L."/>
            <person name="Kyrpides N."/>
            <person name="Kim E."/>
            <person name="Daly M.J."/>
            <person name="Fredrickson J.K."/>
            <person name="Makarova K.S."/>
            <person name="Gaidamakova E.K."/>
            <person name="Zhai M."/>
            <person name="Richardson P."/>
        </authorList>
    </citation>
    <scope>NUCLEOTIDE SEQUENCE [LARGE SCALE GENOMIC DNA]</scope>
    <source>
        <strain>DSM 11300 / CIP 105573 / AG-3a</strain>
    </source>
</reference>
<gene>
    <name evidence="1" type="primary">purA</name>
    <name type="ordered locus">Dgeo_0205</name>
</gene>